<comment type="similarity">
    <text evidence="1">Belongs to the universal ribosomal protein uL29 family.</text>
</comment>
<proteinExistence type="inferred from homology"/>
<accession>Q1CCV2</accession>
<accession>D1Q2L3</accession>
<protein>
    <recommendedName>
        <fullName evidence="1">Large ribosomal subunit protein uL29</fullName>
    </recommendedName>
    <alternativeName>
        <fullName evidence="2">50S ribosomal protein L29</fullName>
    </alternativeName>
</protein>
<keyword id="KW-0687">Ribonucleoprotein</keyword>
<keyword id="KW-0689">Ribosomal protein</keyword>
<sequence length="63" mass="7273">MKAQELREKSVEELNTELLNLLREQFNLRMQAASGQLQQTHLLKQVRRNVARVKTLLTEKAGA</sequence>
<feature type="chain" id="PRO_1000007658" description="Large ribosomal subunit protein uL29">
    <location>
        <begin position="1"/>
        <end position="63"/>
    </location>
</feature>
<gene>
    <name evidence="1" type="primary">rpmC</name>
    <name type="ordered locus">YPN_3851</name>
    <name type="ORF">YP516_4374</name>
</gene>
<name>RL29_YERPN</name>
<evidence type="ECO:0000255" key="1">
    <source>
        <dbReference type="HAMAP-Rule" id="MF_00374"/>
    </source>
</evidence>
<evidence type="ECO:0000305" key="2"/>
<organism>
    <name type="scientific">Yersinia pestis bv. Antiqua (strain Nepal516)</name>
    <dbReference type="NCBI Taxonomy" id="377628"/>
    <lineage>
        <taxon>Bacteria</taxon>
        <taxon>Pseudomonadati</taxon>
        <taxon>Pseudomonadota</taxon>
        <taxon>Gammaproteobacteria</taxon>
        <taxon>Enterobacterales</taxon>
        <taxon>Yersiniaceae</taxon>
        <taxon>Yersinia</taxon>
    </lineage>
</organism>
<dbReference type="EMBL" id="CP000305">
    <property type="protein sequence ID" value="ABG20178.1"/>
    <property type="molecule type" value="Genomic_DNA"/>
</dbReference>
<dbReference type="EMBL" id="ACNQ01000019">
    <property type="protein sequence ID" value="EEO74766.1"/>
    <property type="molecule type" value="Genomic_DNA"/>
</dbReference>
<dbReference type="RefSeq" id="WP_002218942.1">
    <property type="nucleotide sequence ID" value="NZ_ACNQ01000019.1"/>
</dbReference>
<dbReference type="SMR" id="Q1CCV2"/>
<dbReference type="GeneID" id="96663188"/>
<dbReference type="KEGG" id="ypn:YPN_3851"/>
<dbReference type="HOGENOM" id="CLU_158491_1_2_6"/>
<dbReference type="Proteomes" id="UP000008936">
    <property type="component" value="Chromosome"/>
</dbReference>
<dbReference type="GO" id="GO:0022625">
    <property type="term" value="C:cytosolic large ribosomal subunit"/>
    <property type="evidence" value="ECO:0007669"/>
    <property type="project" value="TreeGrafter"/>
</dbReference>
<dbReference type="GO" id="GO:0003735">
    <property type="term" value="F:structural constituent of ribosome"/>
    <property type="evidence" value="ECO:0007669"/>
    <property type="project" value="InterPro"/>
</dbReference>
<dbReference type="GO" id="GO:0006412">
    <property type="term" value="P:translation"/>
    <property type="evidence" value="ECO:0007669"/>
    <property type="project" value="UniProtKB-UniRule"/>
</dbReference>
<dbReference type="CDD" id="cd00427">
    <property type="entry name" value="Ribosomal_L29_HIP"/>
    <property type="match status" value="1"/>
</dbReference>
<dbReference type="FunFam" id="1.10.287.310:FF:000001">
    <property type="entry name" value="50S ribosomal protein L29"/>
    <property type="match status" value="1"/>
</dbReference>
<dbReference type="Gene3D" id="6.10.140.1970">
    <property type="match status" value="1"/>
</dbReference>
<dbReference type="HAMAP" id="MF_00374">
    <property type="entry name" value="Ribosomal_uL29"/>
    <property type="match status" value="1"/>
</dbReference>
<dbReference type="InterPro" id="IPR050063">
    <property type="entry name" value="Ribosomal_protein_uL29"/>
</dbReference>
<dbReference type="InterPro" id="IPR001854">
    <property type="entry name" value="Ribosomal_uL29"/>
</dbReference>
<dbReference type="InterPro" id="IPR018254">
    <property type="entry name" value="Ribosomal_uL29_CS"/>
</dbReference>
<dbReference type="InterPro" id="IPR036049">
    <property type="entry name" value="Ribosomal_uL29_sf"/>
</dbReference>
<dbReference type="NCBIfam" id="TIGR00012">
    <property type="entry name" value="L29"/>
    <property type="match status" value="1"/>
</dbReference>
<dbReference type="PANTHER" id="PTHR10916">
    <property type="entry name" value="60S RIBOSOMAL PROTEIN L35/50S RIBOSOMAL PROTEIN L29"/>
    <property type="match status" value="1"/>
</dbReference>
<dbReference type="PANTHER" id="PTHR10916:SF0">
    <property type="entry name" value="LARGE RIBOSOMAL SUBUNIT PROTEIN UL29C"/>
    <property type="match status" value="1"/>
</dbReference>
<dbReference type="Pfam" id="PF00831">
    <property type="entry name" value="Ribosomal_L29"/>
    <property type="match status" value="1"/>
</dbReference>
<dbReference type="SUPFAM" id="SSF46561">
    <property type="entry name" value="Ribosomal protein L29 (L29p)"/>
    <property type="match status" value="1"/>
</dbReference>
<dbReference type="PROSITE" id="PS00579">
    <property type="entry name" value="RIBOSOMAL_L29"/>
    <property type="match status" value="1"/>
</dbReference>
<reference key="1">
    <citation type="journal article" date="2006" name="J. Bacteriol.">
        <title>Complete genome sequence of Yersinia pestis strains Antiqua and Nepal516: evidence of gene reduction in an emerging pathogen.</title>
        <authorList>
            <person name="Chain P.S.G."/>
            <person name="Hu P."/>
            <person name="Malfatti S.A."/>
            <person name="Radnedge L."/>
            <person name="Larimer F."/>
            <person name="Vergez L.M."/>
            <person name="Worsham P."/>
            <person name="Chu M.C."/>
            <person name="Andersen G.L."/>
        </authorList>
    </citation>
    <scope>NUCLEOTIDE SEQUENCE [LARGE SCALE GENOMIC DNA]</scope>
    <source>
        <strain>Nepal516</strain>
    </source>
</reference>
<reference key="2">
    <citation type="submission" date="2009-04" db="EMBL/GenBank/DDBJ databases">
        <title>Yersinia pestis Nepal516A whole genome shotgun sequencing project.</title>
        <authorList>
            <person name="Plunkett G. III"/>
            <person name="Anderson B.D."/>
            <person name="Baumler D.J."/>
            <person name="Burland V."/>
            <person name="Cabot E.L."/>
            <person name="Glasner J.D."/>
            <person name="Mau B."/>
            <person name="Neeno-Eckwall E."/>
            <person name="Perna N.T."/>
            <person name="Munk A.C."/>
            <person name="Tapia R."/>
            <person name="Green L.D."/>
            <person name="Rogers Y.C."/>
            <person name="Detter J.C."/>
            <person name="Bruce D.C."/>
            <person name="Brettin T.S."/>
        </authorList>
    </citation>
    <scope>NUCLEOTIDE SEQUENCE [LARGE SCALE GENOMIC DNA]</scope>
    <source>
        <strain>Nepal516</strain>
    </source>
</reference>